<organism>
    <name type="scientific">Homo sapiens</name>
    <name type="common">Human</name>
    <dbReference type="NCBI Taxonomy" id="9606"/>
    <lineage>
        <taxon>Eukaryota</taxon>
        <taxon>Metazoa</taxon>
        <taxon>Chordata</taxon>
        <taxon>Craniata</taxon>
        <taxon>Vertebrata</taxon>
        <taxon>Euteleostomi</taxon>
        <taxon>Mammalia</taxon>
        <taxon>Eutheria</taxon>
        <taxon>Euarchontoglires</taxon>
        <taxon>Primates</taxon>
        <taxon>Haplorrhini</taxon>
        <taxon>Catarrhini</taxon>
        <taxon>Hominidae</taxon>
        <taxon>Homo</taxon>
    </lineage>
</organism>
<dbReference type="EC" id="2.4.1.17" evidence="2 4 5 6 7 8"/>
<dbReference type="EMBL" id="AJ006054">
    <property type="protein sequence ID" value="CAB41974.1"/>
    <property type="molecule type" value="mRNA"/>
</dbReference>
<dbReference type="EMBL" id="AK304249">
    <property type="protein sequence ID" value="BAG65116.1"/>
    <property type="molecule type" value="mRNA"/>
</dbReference>
<dbReference type="EMBL" id="AK314209">
    <property type="status" value="NOT_ANNOTATED_CDS"/>
    <property type="molecule type" value="mRNA"/>
</dbReference>
<dbReference type="EMBL" id="AC093829">
    <property type="status" value="NOT_ANNOTATED_CDS"/>
    <property type="molecule type" value="Genomic_DNA"/>
</dbReference>
<dbReference type="CCDS" id="CCDS3529.1">
    <molecule id="P0DTE4-1"/>
</dbReference>
<dbReference type="CCDS" id="CCDS58901.1"/>
<dbReference type="CCDS" id="CCDS58902.1">
    <molecule id="P0DTE4-4"/>
</dbReference>
<dbReference type="RefSeq" id="NP_001239203.2">
    <molecule id="P0DTE4-4"/>
    <property type="nucleotide sequence ID" value="NM_001252274.3"/>
</dbReference>
<dbReference type="RefSeq" id="NP_001239204.2">
    <molecule id="P0DTE4-5"/>
    <property type="nucleotide sequence ID" value="NM_001252275.3"/>
</dbReference>
<dbReference type="RefSeq" id="NP_001288168.1">
    <property type="nucleotide sequence ID" value="NM_001301239.1"/>
</dbReference>
<dbReference type="RefSeq" id="NP_006789.3">
    <molecule id="P0DTE4-1"/>
    <property type="nucleotide sequence ID" value="NM_006798.5"/>
</dbReference>
<dbReference type="SMR" id="P0DTE4"/>
<dbReference type="FunCoup" id="P0DTE4">
    <property type="interactions" value="323"/>
</dbReference>
<dbReference type="IntAct" id="P0DTE4">
    <property type="interactions" value="1"/>
</dbReference>
<dbReference type="ChEMBL" id="CHEMBL1743321"/>
<dbReference type="SwissLipids" id="SLP:000001983"/>
<dbReference type="GlyCosmos" id="P0DTE4">
    <property type="glycosylation" value="3 sites, No reported glycans"/>
</dbReference>
<dbReference type="GlyGen" id="P0DTE4">
    <property type="glycosylation" value="2 sites"/>
</dbReference>
<dbReference type="iPTMnet" id="P0DTE4"/>
<dbReference type="PhosphoSitePlus" id="P0DTE4"/>
<dbReference type="jPOST" id="P0DTE4"/>
<dbReference type="MassIVE" id="P0DTE4"/>
<dbReference type="PeptideAtlas" id="P0DTE4"/>
<dbReference type="Antibodypedia" id="49675">
    <property type="antibodies" value="11 antibodies from 7 providers"/>
</dbReference>
<dbReference type="Antibodypedia" id="72053">
    <property type="antibodies" value="7 antibodies from 4 providers"/>
</dbReference>
<dbReference type="DNASU" id="10941"/>
<dbReference type="Ensembl" id="ENST00000286604.9">
    <molecule id="P0DTE4-5"/>
    <property type="protein sequence ID" value="ENSP00000286604.4"/>
    <property type="gene ID" value="ENSG00000173610.13"/>
</dbReference>
<dbReference type="Ensembl" id="ENST00000503640.5">
    <molecule id="P0DTE4-1"/>
    <property type="protein sequence ID" value="ENSP00000424478.1"/>
    <property type="gene ID" value="ENSG00000173610.13"/>
</dbReference>
<dbReference type="Ensembl" id="ENST00000514019.1">
    <molecule id="P0DTE4-4"/>
    <property type="protein sequence ID" value="ENSP00000425497.1"/>
    <property type="gene ID" value="ENSG00000173610.13"/>
</dbReference>
<dbReference type="GeneID" id="10941"/>
<dbReference type="KEGG" id="hsa:10941"/>
<dbReference type="MANE-Select" id="ENST00000286604.9">
    <property type="protein sequence ID" value="ENSP00000286604.4"/>
    <property type="RefSeq nucleotide sequence ID" value="NM_001252275.3"/>
    <property type="RefSeq protein sequence ID" value="NP_001239204.2"/>
</dbReference>
<dbReference type="AGR" id="HGNC:12542"/>
<dbReference type="CTD" id="10941"/>
<dbReference type="DisGeNET" id="10941"/>
<dbReference type="GeneCards" id="UGT2A1"/>
<dbReference type="HGNC" id="HGNC:12542">
    <property type="gene designation" value="UGT2A1"/>
</dbReference>
<dbReference type="HPA" id="ENSG00000173610">
    <property type="expression patterns" value="Group enriched (choroid plexus, kidney, liver, pituitary gland)"/>
</dbReference>
<dbReference type="MIM" id="604716">
    <property type="type" value="gene"/>
</dbReference>
<dbReference type="neXtProt" id="NX_P0DTE4"/>
<dbReference type="OpenTargets" id="ENSG00000173610"/>
<dbReference type="GeneTree" id="ENSGT00940000161344"/>
<dbReference type="InParanoid" id="P0DTE4"/>
<dbReference type="OMA" id="HFGIYEM"/>
<dbReference type="OrthoDB" id="5835829at2759"/>
<dbReference type="Reactome" id="R-HSA-156588">
    <property type="pathway name" value="Glucuronidation"/>
</dbReference>
<dbReference type="Reactome" id="R-HSA-9749641">
    <property type="pathway name" value="Aspirin ADME"/>
</dbReference>
<dbReference type="SignaLink" id="P0DTE4"/>
<dbReference type="PRO" id="PR:P0DTE4"/>
<dbReference type="Proteomes" id="UP000005640">
    <property type="component" value="Chromosome 4"/>
</dbReference>
<dbReference type="Bgee" id="ENSG00000173610">
    <property type="expression patterns" value="Expressed in olfactory segment of nasal mucosa and 43 other cell types or tissues"/>
</dbReference>
<dbReference type="ExpressionAtlas" id="P0DTE4">
    <property type="expression patterns" value="baseline and differential"/>
</dbReference>
<dbReference type="GO" id="GO:0005789">
    <property type="term" value="C:endoplasmic reticulum membrane"/>
    <property type="evidence" value="ECO:0007669"/>
    <property type="project" value="UniProtKB-SubCell"/>
</dbReference>
<dbReference type="GO" id="GO:0015020">
    <property type="term" value="F:glucuronosyltransferase activity"/>
    <property type="evidence" value="ECO:0000314"/>
    <property type="project" value="UniProtKB"/>
</dbReference>
<dbReference type="GO" id="GO:0008206">
    <property type="term" value="P:bile acid metabolic process"/>
    <property type="evidence" value="ECO:0000314"/>
    <property type="project" value="UniProtKB"/>
</dbReference>
<dbReference type="GO" id="GO:0009608">
    <property type="term" value="P:response to symbiont"/>
    <property type="evidence" value="ECO:0000314"/>
    <property type="project" value="BHF-UCL"/>
</dbReference>
<dbReference type="GO" id="GO:0007606">
    <property type="term" value="P:sensory perception of chemical stimulus"/>
    <property type="evidence" value="ECO:0000314"/>
    <property type="project" value="UniProtKB"/>
</dbReference>
<dbReference type="GO" id="GO:0007608">
    <property type="term" value="P:sensory perception of smell"/>
    <property type="evidence" value="ECO:0007669"/>
    <property type="project" value="UniProtKB-KW"/>
</dbReference>
<dbReference type="GO" id="GO:0006805">
    <property type="term" value="P:xenobiotic metabolic process"/>
    <property type="evidence" value="ECO:0000314"/>
    <property type="project" value="BHF-UCL"/>
</dbReference>
<dbReference type="CDD" id="cd03784">
    <property type="entry name" value="GT1_Gtf-like"/>
    <property type="match status" value="1"/>
</dbReference>
<dbReference type="FunFam" id="3.40.50.2000:FF:000158">
    <property type="entry name" value="UDP-glucuronosyltransferase 2A1"/>
    <property type="match status" value="1"/>
</dbReference>
<dbReference type="FunFam" id="3.40.50.2000:FF:000134">
    <property type="entry name" value="UDP-glucuronosyltransferase 2A2 isoform X1"/>
    <property type="match status" value="1"/>
</dbReference>
<dbReference type="Gene3D" id="3.40.50.2000">
    <property type="entry name" value="Glycogen Phosphorylase B"/>
    <property type="match status" value="2"/>
</dbReference>
<dbReference type="InterPro" id="IPR050271">
    <property type="entry name" value="UDP-glycosyltransferase"/>
</dbReference>
<dbReference type="InterPro" id="IPR002213">
    <property type="entry name" value="UDP_glucos_trans"/>
</dbReference>
<dbReference type="InterPro" id="IPR035595">
    <property type="entry name" value="UDP_glycos_trans_CS"/>
</dbReference>
<dbReference type="PANTHER" id="PTHR48043">
    <property type="entry name" value="EG:EG0003.4 PROTEIN-RELATED"/>
    <property type="match status" value="1"/>
</dbReference>
<dbReference type="PANTHER" id="PTHR48043:SF140">
    <property type="entry name" value="UDP-GLUCURONOSYLTRANSFERASE 2A1"/>
    <property type="match status" value="1"/>
</dbReference>
<dbReference type="Pfam" id="PF00201">
    <property type="entry name" value="UDPGT"/>
    <property type="match status" value="2"/>
</dbReference>
<dbReference type="SUPFAM" id="SSF53756">
    <property type="entry name" value="UDP-Glycosyltransferase/glycogen phosphorylase"/>
    <property type="match status" value="1"/>
</dbReference>
<dbReference type="PROSITE" id="PS00375">
    <property type="entry name" value="UDPGT"/>
    <property type="match status" value="1"/>
</dbReference>
<proteinExistence type="evidence at protein level"/>
<accession>P0DTE4</accession>
<accession>B4E2F4</accession>
<accession>D3GER1</accession>
<accession>D3GER2</accession>
<accession>E9PDM7</accession>
<accession>J3KNA3</accession>
<accession>Q9Y4X1</accession>
<protein>
    <recommendedName>
        <fullName evidence="12">UDP-glucuronosyltransferase 2A1</fullName>
        <shortName>UDPGT 2A1</shortName>
        <shortName>UGT2A1</shortName>
        <ecNumber evidence="2 4 5 6 7 8">2.4.1.17</ecNumber>
    </recommendedName>
</protein>
<name>UD2A1_HUMAN</name>
<gene>
    <name evidence="21" type="primary">UGT2A1</name>
</gene>
<feature type="signal peptide" evidence="1">
    <location>
        <begin position="1"/>
        <end position="20"/>
    </location>
</feature>
<feature type="chain" id="PRO_0000036023" description="UDP-glucuronosyltransferase 2A1" evidence="1">
    <location>
        <begin position="21"/>
        <end position="527"/>
    </location>
</feature>
<feature type="topological domain" description="Lumenal" evidence="14">
    <location>
        <begin position="21"/>
        <end position="491"/>
    </location>
</feature>
<feature type="transmembrane region" description="Helical" evidence="1">
    <location>
        <begin position="492"/>
        <end position="512"/>
    </location>
</feature>
<feature type="topological domain" description="Cytoplasmic" evidence="14">
    <location>
        <begin position="513"/>
        <end position="527"/>
    </location>
</feature>
<feature type="glycosylation site" description="N-linked (GlcNAc...) asparagine" evidence="1">
    <location>
        <position position="49"/>
    </location>
</feature>
<feature type="glycosylation site" description="N-linked (GlcNAc...) asparagine" evidence="1">
    <location>
        <position position="347"/>
    </location>
</feature>
<feature type="splice variant" id="VSP_061418" description="In isoform 2." evidence="11">
    <original>GGLLLCCPGWSAVADLGSLQPLLPGFKRFSRLSLHCSWDYRLPA</original>
    <variation>DGSHWLNIKIILEELIQRNHNVTVLASSATLFINSNPDSPVNFEVIPVSYKKSNIDSLIEHMIMLWIDHRPTPLTIWAFYKELGKLLDTFFQINIQLCDGVLKNPKLMARLQKGGFDVLVADPVTICGDLVALKLGIPFMYTLRFSPASTVERHCGKIPAPVSYVPAALSELTDQMTFGERIKNTISYSLQDYIFQSYWGEWNSYYSKIL</variation>
    <location>
        <begin position="239"/>
        <end position="282"/>
    </location>
</feature>
<feature type="splice variant" id="VSP_061419" description="In isoform 1.">
    <location>
        <begin position="240"/>
        <end position="283"/>
    </location>
</feature>
<feature type="splice variant" id="VSP_061420" description="In isoform 1." evidence="10">
    <original>K</original>
    <variation>KEMEEFIQSSGKNGVVVFSLGSMVKNLTEEKANLIASALAQIPQK</variation>
    <location>
        <position position="332"/>
    </location>
</feature>
<feature type="sequence variant" id="VAR_057326" description="In dbSNP:rs4148304." evidence="3">
    <original>V</original>
    <variation>I</variation>
    <location>
        <position position="391"/>
    </location>
</feature>
<feature type="sequence conflict" description="In Ref. 1; CAB41974." evidence="14" ref="1">
    <original>L</original>
    <variation>S</variation>
    <location>
        <position position="92"/>
    </location>
</feature>
<feature type="glycosylation site" description="N-linked (GlcNAc...) asparagine" evidence="1">
    <location sequence="P0DTE4-1">
        <position position="313"/>
    </location>
</feature>
<feature type="sequence variant" id="VAR_024686" description="In dbSNP:rs4148301.">
    <original>G</original>
    <variation>R</variation>
    <location sequence="P0DTE4-1">
        <position position="308"/>
    </location>
</feature>
<evidence type="ECO:0000255" key="1"/>
<evidence type="ECO:0000269" key="2">
    <source>
    </source>
</evidence>
<evidence type="ECO:0000269" key="3">
    <source>
    </source>
</evidence>
<evidence type="ECO:0000269" key="4">
    <source>
    </source>
</evidence>
<evidence type="ECO:0000269" key="5">
    <source>
    </source>
</evidence>
<evidence type="ECO:0000269" key="6">
    <source>
    </source>
</evidence>
<evidence type="ECO:0000269" key="7">
    <source>
    </source>
</evidence>
<evidence type="ECO:0000269" key="8">
    <source>
    </source>
</evidence>
<evidence type="ECO:0000269" key="9">
    <source>
    </source>
</evidence>
<evidence type="ECO:0000303" key="10">
    <source>
    </source>
</evidence>
<evidence type="ECO:0000303" key="11">
    <source>
    </source>
</evidence>
<evidence type="ECO:0000303" key="12">
    <source>
    </source>
</evidence>
<evidence type="ECO:0000303" key="13">
    <source>
    </source>
</evidence>
<evidence type="ECO:0000305" key="14"/>
<evidence type="ECO:0000305" key="15">
    <source>
    </source>
</evidence>
<evidence type="ECO:0000305" key="16">
    <source>
    </source>
</evidence>
<evidence type="ECO:0000305" key="17">
    <source>
    </source>
</evidence>
<evidence type="ECO:0000305" key="18">
    <source>
    </source>
</evidence>
<evidence type="ECO:0000305" key="19">
    <source>
    </source>
</evidence>
<evidence type="ECO:0000305" key="20">
    <source>
    </source>
</evidence>
<evidence type="ECO:0000312" key="21">
    <source>
        <dbReference type="HGNC" id="HGNC:12542"/>
    </source>
</evidence>
<comment type="function">
    <text evidence="2 4 5 6 7 8">UDP-glucuronosyltransferase (UGT) that catalyzes phase II biotransformation reactions in which lipophilic substrates are conjugated with glucuronic acid to increase the metabolite's water solubility, thereby facilitating excretion into either the urine or bile (PubMed:10359671, PubMed:18719240, PubMed:19022937, PubMed:19858781, PubMed:23288867, PubMed:23756265). Essential for the elimination and detoxification of drugs, xenobiotics and endogenous compounds (PubMed:10359671, PubMed:19858781, PubMed:23756265). Catalyzes the glucuronidation of endogenous steroid hormones such as androgens (testosterone and epitestosterone) and estrogens (estradiol and epiestriol) (PubMed:18719240, PubMed:19022937, PubMed:19858781, PubMed:23288867). Contributes to bile acid (BA) detoxification by catalyzing the glucuronidation of BA substrates, which are natural detergents for dietary lipids absorption (PubMed:23756265). Shows a high affinity to aliphatic odorants such as citronellol as well as olfactory tissue specificity, and therefore may be involved in olfaction (PubMed:10359671). Shows a potential role in detoxification of toxic waste compounds in the amniotic fluid before birth, and air-born chemical after birth (PubMed:19858781).</text>
</comment>
<comment type="catalytic activity">
    <reaction evidence="2 4 5 6 7 8">
        <text>glucuronate acceptor + UDP-alpha-D-glucuronate = acceptor beta-D-glucuronoside + UDP + H(+)</text>
        <dbReference type="Rhea" id="RHEA:21032"/>
        <dbReference type="ChEBI" id="CHEBI:15378"/>
        <dbReference type="ChEBI" id="CHEBI:58052"/>
        <dbReference type="ChEBI" id="CHEBI:58223"/>
        <dbReference type="ChEBI" id="CHEBI:132367"/>
        <dbReference type="ChEBI" id="CHEBI:132368"/>
        <dbReference type="EC" id="2.4.1.17"/>
    </reaction>
    <physiologicalReaction direction="left-to-right" evidence="15 16 17 18 19 20">
        <dbReference type="Rhea" id="RHEA:21033"/>
    </physiologicalReaction>
</comment>
<comment type="catalytic activity">
    <reaction evidence="7">
        <text>16beta,17beta-estriol + UDP-alpha-D-glucuronate = 16beta,17beta-estriol 16-O-(beta-D-glucuronate) + UDP + H(+)</text>
        <dbReference type="Rhea" id="RHEA:52880"/>
        <dbReference type="ChEBI" id="CHEBI:15378"/>
        <dbReference type="ChEBI" id="CHEBI:58052"/>
        <dbReference type="ChEBI" id="CHEBI:58223"/>
        <dbReference type="ChEBI" id="CHEBI:87620"/>
        <dbReference type="ChEBI" id="CHEBI:136886"/>
    </reaction>
    <physiologicalReaction direction="left-to-right" evidence="19">
        <dbReference type="Rhea" id="RHEA:52881"/>
    </physiologicalReaction>
</comment>
<comment type="catalytic activity">
    <reaction evidence="7">
        <text>16alpha,17alpha-estriol + UDP-alpha-D-glucuronate = 16alpha,17alpha-estriol 16-O-(beta-D-glucuronate) + UDP + H(+)</text>
        <dbReference type="Rhea" id="RHEA:52920"/>
        <dbReference type="ChEBI" id="CHEBI:15378"/>
        <dbReference type="ChEBI" id="CHEBI:42156"/>
        <dbReference type="ChEBI" id="CHEBI:58052"/>
        <dbReference type="ChEBI" id="CHEBI:58223"/>
        <dbReference type="ChEBI" id="CHEBI:136884"/>
    </reaction>
    <physiologicalReaction direction="left-to-right" evidence="19">
        <dbReference type="Rhea" id="RHEA:52921"/>
    </physiologicalReaction>
</comment>
<comment type="catalytic activity">
    <reaction evidence="4 7">
        <text>17alpha-estradiol + UDP-alpha-D-glucuronate = 17alpha-estradiol 17-O-(beta-D-glucuronate) + UDP + H(+)</text>
        <dbReference type="Rhea" id="RHEA:52872"/>
        <dbReference type="ChEBI" id="CHEBI:15378"/>
        <dbReference type="ChEBI" id="CHEBI:17160"/>
        <dbReference type="ChEBI" id="CHEBI:58052"/>
        <dbReference type="ChEBI" id="CHEBI:58223"/>
        <dbReference type="ChEBI" id="CHEBI:136642"/>
    </reaction>
    <physiologicalReaction direction="left-to-right" evidence="16 19">
        <dbReference type="Rhea" id="RHEA:52873"/>
    </physiologicalReaction>
</comment>
<comment type="catalytic activity">
    <reaction evidence="4 6 7">
        <text>17alpha-estradiol + UDP-alpha-D-glucuronate = 17alpha-estradiol 3-O-(beta-D-glucuronate) + UDP + H(+)</text>
        <dbReference type="Rhea" id="RHEA:52868"/>
        <dbReference type="ChEBI" id="CHEBI:15378"/>
        <dbReference type="ChEBI" id="CHEBI:17160"/>
        <dbReference type="ChEBI" id="CHEBI:57529"/>
        <dbReference type="ChEBI" id="CHEBI:58052"/>
        <dbReference type="ChEBI" id="CHEBI:58223"/>
    </reaction>
    <physiologicalReaction direction="left-to-right" evidence="7 16 18">
        <dbReference type="Rhea" id="RHEA:52869"/>
    </physiologicalReaction>
</comment>
<comment type="catalytic activity">
    <reaction evidence="4">
        <text>17beta-estradiol + UDP-alpha-D-glucuronate = 17beta-estradiol 3-O-(beta-D-glucuronate) + UDP + H(+)</text>
        <dbReference type="Rhea" id="RHEA:52460"/>
        <dbReference type="ChEBI" id="CHEBI:15378"/>
        <dbReference type="ChEBI" id="CHEBI:16469"/>
        <dbReference type="ChEBI" id="CHEBI:58052"/>
        <dbReference type="ChEBI" id="CHEBI:58223"/>
        <dbReference type="ChEBI" id="CHEBI:136641"/>
    </reaction>
    <physiologicalReaction direction="left-to-right" evidence="16">
        <dbReference type="Rhea" id="RHEA:52461"/>
    </physiologicalReaction>
</comment>
<comment type="catalytic activity">
    <reaction evidence="4">
        <text>17beta-estradiol + UDP-alpha-D-glucuronate = 17beta-estradiol 17-O-(beta-D-glucuronate) + UDP + H(+)</text>
        <dbReference type="Rhea" id="RHEA:52464"/>
        <dbReference type="ChEBI" id="CHEBI:15378"/>
        <dbReference type="ChEBI" id="CHEBI:16469"/>
        <dbReference type="ChEBI" id="CHEBI:58052"/>
        <dbReference type="ChEBI" id="CHEBI:58223"/>
        <dbReference type="ChEBI" id="CHEBI:82961"/>
    </reaction>
    <physiologicalReaction direction="left-to-right" evidence="16">
        <dbReference type="Rhea" id="RHEA:52465"/>
    </physiologicalReaction>
</comment>
<comment type="catalytic activity">
    <reaction evidence="5">
        <text>testosterone + UDP-alpha-D-glucuronate = testosterone 17-O-(beta-D-glucuronate) + UDP + H(+)</text>
        <dbReference type="Rhea" id="RHEA:52456"/>
        <dbReference type="ChEBI" id="CHEBI:15378"/>
        <dbReference type="ChEBI" id="CHEBI:17347"/>
        <dbReference type="ChEBI" id="CHEBI:58052"/>
        <dbReference type="ChEBI" id="CHEBI:58223"/>
        <dbReference type="ChEBI" id="CHEBI:136639"/>
    </reaction>
    <physiologicalReaction direction="left-to-right" evidence="17">
        <dbReference type="Rhea" id="RHEA:52457"/>
    </physiologicalReaction>
</comment>
<comment type="catalytic activity">
    <reaction evidence="5">
        <text>epitestosterone + UDP-alpha-D-glucuronate = epitestosterone 17-O-(beta-D-glucuronate) + UDP + H(+)</text>
        <dbReference type="Rhea" id="RHEA:52568"/>
        <dbReference type="ChEBI" id="CHEBI:15378"/>
        <dbReference type="ChEBI" id="CHEBI:42534"/>
        <dbReference type="ChEBI" id="CHEBI:58052"/>
        <dbReference type="ChEBI" id="CHEBI:58223"/>
        <dbReference type="ChEBI" id="CHEBI:136673"/>
    </reaction>
    <physiologicalReaction direction="left-to-right" evidence="17">
        <dbReference type="Rhea" id="RHEA:52569"/>
    </physiologicalReaction>
</comment>
<comment type="catalytic activity">
    <reaction evidence="8">
        <text>lithocholate + UDP-alpha-D-glucuronate = lithocholoyl-3-O-(beta-D-glucuronate) + UDP + H(+)</text>
        <dbReference type="Rhea" id="RHEA:53028"/>
        <dbReference type="ChEBI" id="CHEBI:15378"/>
        <dbReference type="ChEBI" id="CHEBI:29744"/>
        <dbReference type="ChEBI" id="CHEBI:58052"/>
        <dbReference type="ChEBI" id="CHEBI:58223"/>
        <dbReference type="ChEBI" id="CHEBI:136965"/>
    </reaction>
    <physiologicalReaction direction="left-to-right" evidence="20">
        <dbReference type="Rhea" id="RHEA:53029"/>
    </physiologicalReaction>
</comment>
<comment type="catalytic activity">
    <reaction evidence="8">
        <text>lithocholate + UDP-alpha-D-glucuronate = lithocholoyl-24-O-(beta-D-glucuronate) + UDP</text>
        <dbReference type="Rhea" id="RHEA:52952"/>
        <dbReference type="ChEBI" id="CHEBI:29744"/>
        <dbReference type="ChEBI" id="CHEBI:58052"/>
        <dbReference type="ChEBI" id="CHEBI:58223"/>
        <dbReference type="ChEBI" id="CHEBI:136902"/>
    </reaction>
    <physiologicalReaction direction="left-to-right" evidence="20">
        <dbReference type="Rhea" id="RHEA:52953"/>
    </physiologicalReaction>
</comment>
<comment type="catalytic activity">
    <reaction evidence="8">
        <text>deoxycholate + UDP-alpha-D-glucuronate = deoxycholoyl-24-O-(beta-D-glucuronate) + UDP</text>
        <dbReference type="Rhea" id="RHEA:52948"/>
        <dbReference type="ChEBI" id="CHEBI:23614"/>
        <dbReference type="ChEBI" id="CHEBI:58052"/>
        <dbReference type="ChEBI" id="CHEBI:58223"/>
        <dbReference type="ChEBI" id="CHEBI:136901"/>
    </reaction>
    <physiologicalReaction direction="left-to-right" evidence="20">
        <dbReference type="Rhea" id="RHEA:52949"/>
    </physiologicalReaction>
</comment>
<comment type="catalytic activity">
    <reaction evidence="8">
        <text>hyodeoxycholate + UDP-alpha-D-glucuronate = hyodeoxycholoyl-24-O-(beta-D-glucuronate) + UDP</text>
        <dbReference type="Rhea" id="RHEA:52956"/>
        <dbReference type="ChEBI" id="CHEBI:58052"/>
        <dbReference type="ChEBI" id="CHEBI:58223"/>
        <dbReference type="ChEBI" id="CHEBI:58875"/>
        <dbReference type="ChEBI" id="CHEBI:136903"/>
    </reaction>
    <physiologicalReaction direction="left-to-right" evidence="20">
        <dbReference type="Rhea" id="RHEA:52957"/>
    </physiologicalReaction>
</comment>
<comment type="catalytic activity">
    <reaction evidence="8">
        <text>hyocholate + UDP-alpha-D-glucuronate = hyocholoyl-24-O-(beta-D-glucuronate) + UDP</text>
        <dbReference type="Rhea" id="RHEA:52960"/>
        <dbReference type="ChEBI" id="CHEBI:58052"/>
        <dbReference type="ChEBI" id="CHEBI:58223"/>
        <dbReference type="ChEBI" id="CHEBI:133661"/>
        <dbReference type="ChEBI" id="CHEBI:136904"/>
    </reaction>
    <physiologicalReaction direction="left-to-right" evidence="20">
        <dbReference type="Rhea" id="RHEA:52961"/>
    </physiologicalReaction>
</comment>
<comment type="biophysicochemical properties">
    <kinetics>
        <KM evidence="4">99 uM for 17alpha-estradiol/epiestradiol (when assaying glucuronidation at position 3)</KM>
        <KM evidence="4">174 uM for 17beta-estradiol/estradiol (when assaying glucuronidation at position 3)</KM>
        <KM evidence="4">36 uM for 17alpha-estradiol/epiestradiol (when assaying glucuronidation at position 17)</KM>
        <KM evidence="4">73 uM for 17beta-estradiol/estradiol (when assaying glucuronidation at position 17)</KM>
        <KM evidence="9">57 uM for estrone (when assaying glucuronidation at position 3)</KM>
        <KM evidence="9">160 uM for 16alpha-hydroxyestrone (when assaying glucuronidation at position 16)</KM>
        <KM evidence="5">38.7 uM for testosterone (when assaying glucuronidation at position 17)</KM>
        <KM evidence="5">11.6 uM for epitestosterone (when assaying glucuronidation at position 17)</KM>
        <KM evidence="2">251 uM for UDP-glucuronate (with 3-hydroxybiphenyl as substrate)</KM>
        <KM evidence="2">274 uM for UDP-glucuronate (with S-(-)-b-citronellol as substrate)</KM>
        <KM evidence="2">56.2 uM for testosterone</KM>
        <KM evidence="2">75.4 uM for 3-hydroxybiphenyl</KM>
        <KM evidence="2">59.5 uM for umbelliferone</KM>
        <KM evidence="2">51.6 uM for S-(-)-b-citronellol</KM>
        <KM evidence="2">170.1 uM for borneol</KM>
        <KM evidence="6">39.5 uM for UDP-glucuronate (with 4-methyl-umbelliferone as substrate)</KM>
        <KM evidence="6">303 uM for 4-nitrophenol</KM>
        <KM evidence="6">32.3 uM for 4-methyl-umbelliferone</KM>
        <KM evidence="6">0.6 uM for 4-phenylphenol</KM>
        <KM evidence="6">619 uM for 4-phenylphenol</KM>
        <KM evidence="8">2344 uM for cholate (when assaying glucuronidation at position 24)</KM>
        <KM evidence="8">1744 uM for chenodeoxycholate (when assaying glucuronidation at position 3)</KM>
        <KM evidence="8">1397 uM for chenodeoxycholate (when assaying glucuronidation at position 24)</KM>
        <KM evidence="8">102.2 uM for lithocholate (when assaying glucuronidation at position 3)</KM>
        <KM evidence="8">102.3 uM for lithocholate (when assaying glucuronidation at position 24)</KM>
        <KM evidence="8">2405.6 uM for deoxycholate (when assaying glucuronidation at position 3)</KM>
        <KM evidence="8">917.9 uM for deoxycholate (when assaying glucuronidation at position 24)</KM>
        <KM evidence="8">237.4 uM for hyodeoxycholate (when assaying glucuronidation at position 6)</KM>
        <KM evidence="8">178.5 uM for hyodeoxycholate (when assaying glucuronidation at position 24)</KM>
        <KM evidence="8">210.7 uM for hyocholate (when assaying glucuronidation at position 24)</KM>
        <Vmax evidence="4">693.0 pmol/min/mg enzyme for the formation of 17alpha-estradiol 3-O-(beta-D-glucuronate)</Vmax>
        <Vmax evidence="4">128.0 pmol/min/mg enzyme for the formation of 17beta-estradiol 3-O-(beta-D-glucuronate)</Vmax>
        <Vmax evidence="4">78.3 pmol/min/mg enzyme for the formation of 17alpha-estradiol 17-O-(beta-D-glucuronate)</Vmax>
        <Vmax evidence="4">265.0 pmol/min/mg enzyme for the formation of 17beta-estradiol 17-O-(beta-D-glucuronate)</Vmax>
        <Vmax evidence="7">57.1 pmol/min/mg enzyme for the formation of 17alpha-estradiol 3-O-(beta-D-glucuronate)</Vmax>
        <Vmax evidence="7">4.6 pmol/min/mg enzyme for the formation of 17beta-estradiol 3-O-(beta-D-glucuronate)</Vmax>
        <Vmax evidence="7">485.0 pmol/min/mg enzyme for the formation of 17alpha-estradiol 17-O-(beta-D-glucuronate)</Vmax>
        <Vmax evidence="7">16.4 pmol/min/mg enzyme for the formation of 17beta-estradiol 17-O-(beta-D-glucuronate)</Vmax>
        <Vmax evidence="7">263.0 pmol/min/mg enzyme for the formation of 16beta,17beta-estriol 16-O-(beta-D-glucuronate)</Vmax>
        <Vmax evidence="7">174.0 pmol/min/mg enzyme for the formation of 16alpha,17alpha-estriol 16-O-(beta-D-glucuronate)</Vmax>
        <Vmax evidence="7">15.8 pmol/min/mg enzyme for the formation of 16alpha,17beta-estriol 16-O-(beta-D-glucuronate)</Vmax>
        <Vmax evidence="7">1.5 pmol/min/mg enzyme for the formation of 16beta,17beta-estriol 17-O-(beta-D-glucuronate)</Vmax>
        <Vmax evidence="7">3.9 pmol/min/mg enzyme for the formation of 16alpha,17alpha-estriol 3-O-(beta-D-glucuronate)</Vmax>
        <Vmax evidence="7">5.9 pmol/min/mg enzyme for the formation of 16alpha,17alpha-estriol 17-O-(beta-D-glucuronate)</Vmax>
        <Vmax evidence="9">51.0 pmol/min/mg enzyme for the formation of estrone 3-O-(beta-D-glucuronate)</Vmax>
        <Vmax evidence="9">210.0 pmol/min/mg enzyme for the formation of 16alpha-hydroxyestrone 16-O-(beta-D-glucuronate)</Vmax>
        <Vmax evidence="5">427.0 pmol/min/mg enzyme for the formation of testosterone 17-O-(beta-D-glucuronate)</Vmax>
        <Vmax evidence="5">271.0 pmol/min/mg enzyme for the formation of epitestosterone 17-O-(beta-D-glucuronate)</Vmax>
        <Vmax evidence="2">250.0 pmol/min/mg enzyme with testosterone as substrate</Vmax>
        <Vmax evidence="2">2600.0 pmol/min/mg enzyme with 3-hydroxybiphenyl as substrate</Vmax>
        <Vmax evidence="2">610.0 pmol/min/mg enzyme with umbelliferone as substrate</Vmax>
        <Vmax evidence="2">1980.0 pmol/min/mg enzyme with S-(-)-b-citronellol as substrate</Vmax>
        <Vmax evidence="2">1050.0 pmol/min/mg enzyme with borneol as substrate</Vmax>
        <Vmax evidence="6">141.0 pmol/min/mg enzyme with 4-nitrophenol as substrate</Vmax>
        <Vmax evidence="6">537.0 pmol/min/mg enzyme with 4-methyl-umbelliferone as substrate</Vmax>
        <Vmax evidence="6">116.0 pmol/min/mg enzyme with 4-phenylphenol as substrate</Vmax>
        <Vmax evidence="6">325.0 pmol/min/mg enzyme with 4-phenylphenol as substrate</Vmax>
        <Vmax evidence="8">83.3 pmol/min/mg enzyme for the formation of choloyl-24-O-(beta-D-glucuronate)</Vmax>
        <Vmax evidence="8">95.0 pmol/min/mg enzyme for the formation of chenodeoxycholoyl-3-O-(beta-D-glucuronate)</Vmax>
        <Vmax evidence="8">536.7 pmol/min/mg enzyme for the formation of chenodeoxycholoyl-24-O-(beta-D-glucuronate)</Vmax>
        <Vmax evidence="8">685.0 pmol/min/mg enzyme for the formation of lithocholoyl-3-O-(beta-D-glucuronate)</Vmax>
        <Vmax evidence="8">305.2 pmol/min/mg enzyme for the formation of lithocholoyl24-O-(beta-D-glucuronate)</Vmax>
        <Vmax evidence="8">83.3 pmol/min/mg enzyme for the formation of deoxycholoyl-3-O-(beta-D-glucuronate)</Vmax>
        <Vmax evidence="8">235.2 pmol/min/mg enzyme for the formation of deoxycholoyl-24-O-(beta-D-glucuronate)</Vmax>
        <Vmax evidence="8">45.1 pmol/min/mg enzyme for the formation of hyodeoxycholate 6-O-(beta-D-glucuronate)</Vmax>
        <Vmax evidence="8">805.1 pmol/min/mg enzyme for the formation of hyocholoyl-24-O-(beta-D-glucuronate)</Vmax>
        <Vmax evidence="8">495.1 pmol/min/mg enzyme for the formation of hyocholoyl-24-O-(beta-D-glucuronate)</Vmax>
    </kinetics>
</comment>
<comment type="subcellular location">
    <subcellularLocation>
        <location evidence="15">Membrane</location>
        <topology evidence="1">Single-pass type I membrane protein</topology>
    </subcellularLocation>
    <subcellularLocation>
        <location evidence="18">Endoplasmic reticulum membrane</location>
        <topology evidence="1">Single-pass membrane protein</topology>
    </subcellularLocation>
</comment>
<comment type="alternative products">
    <event type="alternative splicing"/>
    <isoform>
        <id>P0DTE4-5</id>
        <id>Q9Y4X1-5</id>
        <name>3</name>
        <sequence type="displayed"/>
    </isoform>
    <isoform>
        <id>P0DTE4-1</id>
        <id>Q9Y4X1-1</id>
        <name>1</name>
        <sequence type="described" ref="VSP_061419 VSP_061420"/>
    </isoform>
    <isoform>
        <id>P0DTE4-4</id>
        <id>Q9Y4X1-4</id>
        <name>2</name>
        <sequence type="described" ref="VSP_061418"/>
    </isoform>
</comment>
<comment type="tissue specificity">
    <text evidence="2">Olfactory epithelium, brain and fetal lung (PubMed:10359671). Not present in liver (PubMed:10359671).</text>
</comment>
<comment type="miscellaneous">
    <text evidence="13">UGT2A1 isoform is part of the UGT2A complex locus which displays alternative use of promoters and exons. The locus is defined by 2 alternative promoters giving rise to 2 functionally active polypeptides UGT2A1 and UGT2A2. Alternative splicing of exons results in additional isoforms for each protein class.</text>
</comment>
<comment type="similarity">
    <text evidence="14">Belongs to the UDP-glycosyltransferase family.</text>
</comment>
<sequence length="527" mass="59963">MLNNLLLFSLQISLIGTTLGGNVLIWPMEGSHWLNVKIIIDELIKKEHNVTVLVASGALFITPTSNPSLTFEIYKVPFGKERIEGVIKDFVLTWLENRPSPSTIWRFYQEMAKVIKDFHMVSQEICDGVLKNQQLMAKLKKSKFEVLVSDPVFPCGDIVALKLGIPFMYSLRFSPASTVEKHCGKVPYPPSYVPAVLSELTDQMSFTDRIRNFISYHLQDYMFETLWKSWDSYYSKALGGLLLCCPGWSAVADLGSLQPLLPGFKRFSRLSLHCSWDYRLPAGRPTTLCETMGKAEIWLIRTYWDFEFPRPYLPNFEFVGGLHCKPAKPLPKVLWRYKGKKPATLGNNTQLFDWIPQNDLLGHPKTKAFITHGGTNGIYEAIYHGVPMVGVPMFADQPDNIAHMKAKGAAVEVNLNTMTSVDLLSALRTVINEPSYKENAMRLSRIHHDQPVKPLDRAVFWIEFVMRHKGAKHLRVAAHDLTWFQYHSLDVIGFLLVCVTTAIFLVIQCCLFSCQKFGKIGKKKKRE</sequence>
<keyword id="KW-0025">Alternative splicing</keyword>
<keyword id="KW-0256">Endoplasmic reticulum</keyword>
<keyword id="KW-0325">Glycoprotein</keyword>
<keyword id="KW-0328">Glycosyltransferase</keyword>
<keyword id="KW-0443">Lipid metabolism</keyword>
<keyword id="KW-0472">Membrane</keyword>
<keyword id="KW-0552">Olfaction</keyword>
<keyword id="KW-1185">Reference proteome</keyword>
<keyword id="KW-0716">Sensory transduction</keyword>
<keyword id="KW-0732">Signal</keyword>
<keyword id="KW-0808">Transferase</keyword>
<keyword id="KW-0812">Transmembrane</keyword>
<keyword id="KW-1133">Transmembrane helix</keyword>
<reference key="1">
    <citation type="journal article" date="1999" name="Biochem. J.">
        <title>Cloning and characterization of a novel human olfactory UDP-glucuronosyltransferase.</title>
        <authorList>
            <person name="Jedlitschky G.A."/>
            <person name="Cassidy A.J."/>
            <person name="Sales M."/>
            <person name="Pratt N."/>
            <person name="Burchell B."/>
        </authorList>
    </citation>
    <scope>NUCLEOTIDE SEQUENCE [MRNA] (ISOFORM 1)</scope>
    <scope>FUNCTION</scope>
    <scope>CATALYTIC ACTIVITY</scope>
    <scope>BIOPHYSICOCHEMICAL PROPERTIES</scope>
    <scope>TISSUE SPECIFICITY</scope>
    <source>
        <tissue>Olfactory bulb</tissue>
    </source>
</reference>
<reference key="2">
    <citation type="journal article" date="2004" name="Nat. Genet.">
        <title>Complete sequencing and characterization of 21,243 full-length human cDNAs.</title>
        <authorList>
            <person name="Ota T."/>
            <person name="Suzuki Y."/>
            <person name="Nishikawa T."/>
            <person name="Otsuki T."/>
            <person name="Sugiyama T."/>
            <person name="Irie R."/>
            <person name="Wakamatsu A."/>
            <person name="Hayashi K."/>
            <person name="Sato H."/>
            <person name="Nagai K."/>
            <person name="Kimura K."/>
            <person name="Makita H."/>
            <person name="Sekine M."/>
            <person name="Obayashi M."/>
            <person name="Nishi T."/>
            <person name="Shibahara T."/>
            <person name="Tanaka T."/>
            <person name="Ishii S."/>
            <person name="Yamamoto J."/>
            <person name="Saito K."/>
            <person name="Kawai Y."/>
            <person name="Isono Y."/>
            <person name="Nakamura Y."/>
            <person name="Nagahari K."/>
            <person name="Murakami K."/>
            <person name="Yasuda T."/>
            <person name="Iwayanagi T."/>
            <person name="Wagatsuma M."/>
            <person name="Shiratori A."/>
            <person name="Sudo H."/>
            <person name="Hosoiri T."/>
            <person name="Kaku Y."/>
            <person name="Kodaira H."/>
            <person name="Kondo H."/>
            <person name="Sugawara M."/>
            <person name="Takahashi M."/>
            <person name="Kanda K."/>
            <person name="Yokoi T."/>
            <person name="Furuya T."/>
            <person name="Kikkawa E."/>
            <person name="Omura Y."/>
            <person name="Abe K."/>
            <person name="Kamihara K."/>
            <person name="Katsuta N."/>
            <person name="Sato K."/>
            <person name="Tanikawa M."/>
            <person name="Yamazaki M."/>
            <person name="Ninomiya K."/>
            <person name="Ishibashi T."/>
            <person name="Yamashita H."/>
            <person name="Murakawa K."/>
            <person name="Fujimori K."/>
            <person name="Tanai H."/>
            <person name="Kimata M."/>
            <person name="Watanabe M."/>
            <person name="Hiraoka S."/>
            <person name="Chiba Y."/>
            <person name="Ishida S."/>
            <person name="Ono Y."/>
            <person name="Takiguchi S."/>
            <person name="Watanabe S."/>
            <person name="Yosida M."/>
            <person name="Hotuta T."/>
            <person name="Kusano J."/>
            <person name="Kanehori K."/>
            <person name="Takahashi-Fujii A."/>
            <person name="Hara H."/>
            <person name="Tanase T.-O."/>
            <person name="Nomura Y."/>
            <person name="Togiya S."/>
            <person name="Komai F."/>
            <person name="Hara R."/>
            <person name="Takeuchi K."/>
            <person name="Arita M."/>
            <person name="Imose N."/>
            <person name="Musashino K."/>
            <person name="Yuuki H."/>
            <person name="Oshima A."/>
            <person name="Sasaki N."/>
            <person name="Aotsuka S."/>
            <person name="Yoshikawa Y."/>
            <person name="Matsunawa H."/>
            <person name="Ichihara T."/>
            <person name="Shiohata N."/>
            <person name="Sano S."/>
            <person name="Moriya S."/>
            <person name="Momiyama H."/>
            <person name="Satoh N."/>
            <person name="Takami S."/>
            <person name="Terashima Y."/>
            <person name="Suzuki O."/>
            <person name="Nakagawa S."/>
            <person name="Senoh A."/>
            <person name="Mizoguchi H."/>
            <person name="Goto Y."/>
            <person name="Shimizu F."/>
            <person name="Wakebe H."/>
            <person name="Hishigaki H."/>
            <person name="Watanabe T."/>
            <person name="Sugiyama A."/>
            <person name="Takemoto M."/>
            <person name="Kawakami B."/>
            <person name="Yamazaki M."/>
            <person name="Watanabe K."/>
            <person name="Kumagai A."/>
            <person name="Itakura S."/>
            <person name="Fukuzumi Y."/>
            <person name="Fujimori Y."/>
            <person name="Komiyama M."/>
            <person name="Tashiro H."/>
            <person name="Tanigami A."/>
            <person name="Fujiwara T."/>
            <person name="Ono T."/>
            <person name="Yamada K."/>
            <person name="Fujii Y."/>
            <person name="Ozaki K."/>
            <person name="Hirao M."/>
            <person name="Ohmori Y."/>
            <person name="Kawabata A."/>
            <person name="Hikiji T."/>
            <person name="Kobatake N."/>
            <person name="Inagaki H."/>
            <person name="Ikema Y."/>
            <person name="Okamoto S."/>
            <person name="Okitani R."/>
            <person name="Kawakami T."/>
            <person name="Noguchi S."/>
            <person name="Itoh T."/>
            <person name="Shigeta K."/>
            <person name="Senba T."/>
            <person name="Matsumura K."/>
            <person name="Nakajima Y."/>
            <person name="Mizuno T."/>
            <person name="Morinaga M."/>
            <person name="Sasaki M."/>
            <person name="Togashi T."/>
            <person name="Oyama M."/>
            <person name="Hata H."/>
            <person name="Watanabe M."/>
            <person name="Komatsu T."/>
            <person name="Mizushima-Sugano J."/>
            <person name="Satoh T."/>
            <person name="Shirai Y."/>
            <person name="Takahashi Y."/>
            <person name="Nakagawa K."/>
            <person name="Okumura K."/>
            <person name="Nagase T."/>
            <person name="Nomura N."/>
            <person name="Kikuchi H."/>
            <person name="Masuho Y."/>
            <person name="Yamashita R."/>
            <person name="Nakai K."/>
            <person name="Yada T."/>
            <person name="Nakamura Y."/>
            <person name="Ohara O."/>
            <person name="Isogai T."/>
            <person name="Sugano S."/>
        </authorList>
    </citation>
    <scope>NUCLEOTIDE SEQUENCE [LARGE SCALE MRNA] (ISOFORMS 2 AND 3)</scope>
    <scope>VARIANT ILE-391</scope>
    <source>
        <tissue>Trachea</tissue>
    </source>
</reference>
<reference key="3">
    <citation type="journal article" date="2005" name="Nature">
        <title>Generation and annotation of the DNA sequences of human chromosomes 2 and 4.</title>
        <authorList>
            <person name="Hillier L.W."/>
            <person name="Graves T.A."/>
            <person name="Fulton R.S."/>
            <person name="Fulton L.A."/>
            <person name="Pepin K.H."/>
            <person name="Minx P."/>
            <person name="Wagner-McPherson C."/>
            <person name="Layman D."/>
            <person name="Wylie K."/>
            <person name="Sekhon M."/>
            <person name="Becker M.C."/>
            <person name="Fewell G.A."/>
            <person name="Delehaunty K.D."/>
            <person name="Miner T.L."/>
            <person name="Nash W.E."/>
            <person name="Kremitzki C."/>
            <person name="Oddy L."/>
            <person name="Du H."/>
            <person name="Sun H."/>
            <person name="Bradshaw-Cordum H."/>
            <person name="Ali J."/>
            <person name="Carter J."/>
            <person name="Cordes M."/>
            <person name="Harris A."/>
            <person name="Isak A."/>
            <person name="van Brunt A."/>
            <person name="Nguyen C."/>
            <person name="Du F."/>
            <person name="Courtney L."/>
            <person name="Kalicki J."/>
            <person name="Ozersky P."/>
            <person name="Abbott S."/>
            <person name="Armstrong J."/>
            <person name="Belter E.A."/>
            <person name="Caruso L."/>
            <person name="Cedroni M."/>
            <person name="Cotton M."/>
            <person name="Davidson T."/>
            <person name="Desai A."/>
            <person name="Elliott G."/>
            <person name="Erb T."/>
            <person name="Fronick C."/>
            <person name="Gaige T."/>
            <person name="Haakenson W."/>
            <person name="Haglund K."/>
            <person name="Holmes A."/>
            <person name="Harkins R."/>
            <person name="Kim K."/>
            <person name="Kruchowski S.S."/>
            <person name="Strong C.M."/>
            <person name="Grewal N."/>
            <person name="Goyea E."/>
            <person name="Hou S."/>
            <person name="Levy A."/>
            <person name="Martinka S."/>
            <person name="Mead K."/>
            <person name="McLellan M.D."/>
            <person name="Meyer R."/>
            <person name="Randall-Maher J."/>
            <person name="Tomlinson C."/>
            <person name="Dauphin-Kohlberg S."/>
            <person name="Kozlowicz-Reilly A."/>
            <person name="Shah N."/>
            <person name="Swearengen-Shahid S."/>
            <person name="Snider J."/>
            <person name="Strong J.T."/>
            <person name="Thompson J."/>
            <person name="Yoakum M."/>
            <person name="Leonard S."/>
            <person name="Pearman C."/>
            <person name="Trani L."/>
            <person name="Radionenko M."/>
            <person name="Waligorski J.E."/>
            <person name="Wang C."/>
            <person name="Rock S.M."/>
            <person name="Tin-Wollam A.-M."/>
            <person name="Maupin R."/>
            <person name="Latreille P."/>
            <person name="Wendl M.C."/>
            <person name="Yang S.-P."/>
            <person name="Pohl C."/>
            <person name="Wallis J.W."/>
            <person name="Spieth J."/>
            <person name="Bieri T.A."/>
            <person name="Berkowicz N."/>
            <person name="Nelson J.O."/>
            <person name="Osborne J."/>
            <person name="Ding L."/>
            <person name="Meyer R."/>
            <person name="Sabo A."/>
            <person name="Shotland Y."/>
            <person name="Sinha P."/>
            <person name="Wohldmann P.E."/>
            <person name="Cook L.L."/>
            <person name="Hickenbotham M.T."/>
            <person name="Eldred J."/>
            <person name="Williams D."/>
            <person name="Jones T.A."/>
            <person name="She X."/>
            <person name="Ciccarelli F.D."/>
            <person name="Izaurralde E."/>
            <person name="Taylor J."/>
            <person name="Schmutz J."/>
            <person name="Myers R.M."/>
            <person name="Cox D.R."/>
            <person name="Huang X."/>
            <person name="McPherson J.D."/>
            <person name="Mardis E.R."/>
            <person name="Clifton S.W."/>
            <person name="Warren W.C."/>
            <person name="Chinwalla A.T."/>
            <person name="Eddy S.R."/>
            <person name="Marra M.A."/>
            <person name="Ovcharenko I."/>
            <person name="Furey T.S."/>
            <person name="Miller W."/>
            <person name="Eichler E.E."/>
            <person name="Bork P."/>
            <person name="Suyama M."/>
            <person name="Torrents D."/>
            <person name="Waterston R.H."/>
            <person name="Wilson R.K."/>
        </authorList>
    </citation>
    <scope>NUCLEOTIDE SEQUENCE [LARGE SCALE GENOMIC DNA]</scope>
</reference>
<reference key="4">
    <citation type="journal article" date="2008" name="Drug Metab. Dispos.">
        <title>The configuration of the 17-hydroxy group variably influences the glucuronidation of beta-estradiol and epiestradiol by human UDP-glucuronosyltransferases.</title>
        <authorList>
            <person name="Itaeaho K."/>
            <person name="Mackenzie P.I."/>
            <person name="Ikushiro S."/>
            <person name="Miners J.O."/>
            <person name="Finel M."/>
        </authorList>
    </citation>
    <scope>FUNCTION</scope>
    <scope>CATALYTIC ACTIVITY</scope>
    <scope>BIOPHYSICOCHEMICAL PROPERTIES</scope>
    <scope>SUBSTRATE SPECIFICITY</scope>
</reference>
<reference key="5">
    <citation type="journal article" date="2009" name="Pharmacogenet. Genomics">
        <title>Human UDP-glucuronosyltransferase UGT2A2: cDNA construction, expression, and functional characterization in comparison with UGT2A1 and UGT2A3.</title>
        <authorList>
            <person name="Sneitz N."/>
            <person name="Court M.H."/>
            <person name="Zhang X."/>
            <person name="Laajanen K."/>
            <person name="Yee K.K."/>
            <person name="Dalton P."/>
            <person name="Ding X."/>
            <person name="Finel M."/>
        </authorList>
    </citation>
    <scope>FUNCTION</scope>
    <scope>CATALYTIC ACTIVITY</scope>
    <scope>BIOPHYSICOCHEMICAL PROPERTIES</scope>
    <scope>TISSUE SPECIFICITY</scope>
    <source>
        <tissue>Nasal mucosa</tissue>
    </source>
</reference>
<reference key="6">
    <citation type="journal article" date="2009" name="Drug Metab. Dispos.">
        <title>UDP-glucuronosyltransferases (UGTs) 2B7 and UGT2B17 display converse specificity in testosterone and epitestosterone glucuronidation, whereas UGT2A1 conjugates both androgens similarly.</title>
        <authorList>
            <person name="Sten T."/>
            <person name="Bichlmaier I."/>
            <person name="Kuuranne T."/>
            <person name="Leinonen A."/>
            <person name="Yli-Kauhaluoma J."/>
            <person name="Finel M."/>
        </authorList>
    </citation>
    <scope>FUNCTION</scope>
    <scope>CATALYTIC ACTIVITY</scope>
    <scope>BIOPHYSICOCHEMICAL PROPERTIES</scope>
</reference>
<reference key="7">
    <citation type="journal article" date="2013" name="Drug Metab. Dispos.">
        <title>The Human UDP-glucuronosyltransferase UGT2A1 and UGT2A2 enzymes are highly active in bile acid glucuronidation.</title>
        <authorList>
            <person name="Perreault M."/>
            <person name="Gauthier-Landry L."/>
            <person name="Trottier J."/>
            <person name="Verreault M."/>
            <person name="Caron P."/>
            <person name="Finel M."/>
            <person name="Barbier O."/>
        </authorList>
    </citation>
    <scope>FUNCTION</scope>
    <scope>CATALYTIC ACTIVITY</scope>
    <scope>BIOPHYSICOCHEMICAL PROPERTIES</scope>
</reference>
<reference key="8">
    <citation type="journal article" date="2013" name="Drug Metab. Dispos.">
        <title>Regiospecificity and stereospecificity of human UDP-glucuronosyltransferases in the glucuronidation of estriol, 16-epiestriol, 17-epiestriol, and 13-epiestradiol.</title>
        <authorList>
            <person name="Sneitz N."/>
            <person name="Vahermo M."/>
            <person name="Mosorin J."/>
            <person name="Laakkonen L."/>
            <person name="Poirier D."/>
            <person name="Finel M."/>
        </authorList>
    </citation>
    <scope>FUNCTION</scope>
    <scope>CATALYTIC ACTIVITY</scope>
    <scope>BIOPHYSICOCHEMICAL PROPERTIES</scope>
</reference>
<reference key="9">
    <citation type="journal article" date="2015" name="J. Steroid Biochem. Mol. Biol.">
        <title>Glucuronidation of estrone and 16alpha-hydroxyestrone by human UGT enzymes: The key roles of UGT1A10 and UGT2B7.</title>
        <authorList>
            <person name="Kallionpaeae R.A."/>
            <person name="Jaervinen E."/>
            <person name="Finel M."/>
        </authorList>
    </citation>
    <scope>BIOPHYSICOCHEMICAL PROPERTIES</scope>
</reference>